<accession>Q46ZL2</accession>
<name>3HAPM_CUPPJ</name>
<reference key="1">
    <citation type="journal article" date="2010" name="PLoS ONE">
        <title>The complete multipartite genome sequence of Cupriavidus necator JMP134, a versatile pollutant degrader.</title>
        <authorList>
            <person name="Lykidis A."/>
            <person name="Perez-Pantoja D."/>
            <person name="Ledger T."/>
            <person name="Mavromatis K."/>
            <person name="Anderson I.J."/>
            <person name="Ivanova N.N."/>
            <person name="Hooper S.D."/>
            <person name="Lapidus A."/>
            <person name="Lucas S."/>
            <person name="Gonzalez B."/>
            <person name="Kyrpides N.C."/>
        </authorList>
    </citation>
    <scope>NUCLEOTIDE SEQUENCE [LARGE SCALE GENOMIC DNA]</scope>
    <source>
        <strain>JMP134 / LMG 1197</strain>
    </source>
</reference>
<reference key="2">
    <citation type="journal article" date="1999" name="J. Bacteriol.">
        <title>3-Hydroxylaminophenol mutase from Ralstonia eutropha JMP134 catalyzes a Bamberger rearrangement.</title>
        <authorList>
            <person name="Schenzle A."/>
            <person name="Lenke H."/>
            <person name="Spain J.C."/>
            <person name="Knackmuss H.J."/>
        </authorList>
    </citation>
    <scope>PROTEIN SEQUENCE OF 2-42; 62-66 AND 120-134</scope>
    <scope>FUNCTION AS A 3HAP MUTASE</scope>
    <scope>CATALYTIC ACTIVITY</scope>
    <scope>SUBSTRATE SPECIFICITY</scope>
    <scope>BIOPHYSICOCHEMICAL PROPERTIES</scope>
    <scope>ACTIVITY REGULATION</scope>
    <scope>REACTION MECHANISM</scope>
    <source>
        <strain>JMP134 / LMG 1197</strain>
    </source>
</reference>
<reference key="3">
    <citation type="journal article" date="1997" name="Appl. Environ. Microbiol.">
        <title>Catabolism of 3-nitrophenol by Ralstonia eutropha JMP 134.</title>
        <authorList>
            <person name="Schenzle A."/>
            <person name="Lenke H."/>
            <person name="Fischer P."/>
            <person name="Williams P.A."/>
            <person name="Knackmuss H."/>
        </authorList>
    </citation>
    <scope>PATHWAY</scope>
    <source>
        <strain>JMP134 / LMG 1197</strain>
    </source>
</reference>
<keyword id="KW-0903">Direct protein sequencing</keyword>
<keyword id="KW-0413">Isomerase</keyword>
<sequence>MAQSVADVMKLVKENDVKFVDFRFTDTKGKEQHVSVPTSHFDDDKFESGHAFDGSSIAGWKGIEASDMLLMPDSNTAFIDPFYEEPTLVLTCDVVEPSDGKGYDRDPRSIAKRAEAYLKSTGLGDTAFFGPEPEFFIFDGVTWNVDMQGCFVKVHSEEAPWSSGKEFEHGNSGHRPGKKGGYFPVAPIDTFQDMRSEMCLILESLGIPVEVHHHEVAGQGQNEIGTRFSTLVQRADWTQLQKYVIQNVAHTYGKTATFMPKPIVGDNGSGMHVHQSVWKDGQNLFAGNGYAGLSEFALYYIGGIIKHARALNAITNPGTNSYKRLVPGFEAPVKLAYSARNRSASIRIPYVANPKGRRIETRFPDPLMNPYLGFSALLMAGLDGVMNKIHPGEAADKNLYDLPPEEDAKIPTVCNSLDQSLEYLDNDREFLTRGGVFSNSMLDAYIELKMEEVTRFRMTTHPVEFEMYYSL</sequence>
<comment type="function">
    <text evidence="3">Catalyzes the isomerization of 3-hydroxylaminophenol (3HAP) to aminohydroquinone, a step in the degradative pathway of 3-nitrophenol. The enzymatic reaction is regiospecific since it leads to the formation of aminohydroquinone exclusively, without producing the isomeric 4-aminocatechol. Can also isomerize other hydroxylaminoaromatic compounds, such as hydroxylaminobenzene to a mixture of 2-aminophenol and 4-aminophenol, 4-hydroxylaminotoluene to 6-amino-m-cresol, and 2-chloro-5-hydroxylaminophenol to 2-amino-5-chlorohydroquinone. Does not act on 4-hydroxylaminobenzoate.</text>
</comment>
<comment type="catalytic activity">
    <reaction evidence="3">
        <text>3-hydroxyaminophenol = aminohydroquinone</text>
        <dbReference type="Rhea" id="RHEA:20577"/>
        <dbReference type="ChEBI" id="CHEBI:13769"/>
        <dbReference type="ChEBI" id="CHEBI:50446"/>
        <dbReference type="EC" id="5.4.4.3"/>
    </reaction>
</comment>
<comment type="activity regulation">
    <text evidence="3">Is inhibited by H(2)O(2). 1,10-phenanthroline inhibits the activity slightly, but other metal cation chelators such as EDTA or tiron have no effect on the activity. Divalent metal cations and hydroxylamine have also no effect on the activity. Due to the relationship of the protein with glutamine synthetases, glutamate and glutamine were tested as inhibitors; neither preincubation of the compounds with the enzyme nor their addition to the assay buffer affected 3HAP mutase activity.</text>
</comment>
<comment type="biophysicochemical properties">
    <kinetics>
        <KM evidence="3">0.1 mM for 3-hydroxyaminophenol</KM>
        <Vmax evidence="3">4.8 umol/min/mg enzyme</Vmax>
        <text>The values are approximate data due to the instability of the substrate.</text>
    </kinetics>
    <phDependence>
        <text evidence="3">Optimum pH is 6.5.</text>
    </phDependence>
    <temperatureDependence>
        <text evidence="3">Optimum temperature is above 30 degrees Celsius. Heating to 60 degrees Celsius for 1 minute abolishes 72% of the original mutase activity, and no activity remains after 8 minutes.</text>
    </temperatureDependence>
</comment>
<comment type="miscellaneous">
    <text>3HAP mutase requires neither a cofactor nor oxygen for the enzymatic reaction. This indicates that the enzyme catalyzes a Bamberger-type rearrangement.</text>
</comment>
<comment type="similarity">
    <text evidence="4">Belongs to the glutamine synthetase family.</text>
</comment>
<dbReference type="EC" id="5.4.4.3"/>
<dbReference type="EMBL" id="CP000090">
    <property type="protein sequence ID" value="AAZ61421.1"/>
    <property type="molecule type" value="Genomic_DNA"/>
</dbReference>
<dbReference type="SMR" id="Q46ZL2"/>
<dbReference type="STRING" id="264198.Reut_A2057"/>
<dbReference type="KEGG" id="reu:Reut_A2057"/>
<dbReference type="eggNOG" id="COG0174">
    <property type="taxonomic scope" value="Bacteria"/>
</dbReference>
<dbReference type="HOGENOM" id="CLU_017290_1_2_4"/>
<dbReference type="OrthoDB" id="9807095at2"/>
<dbReference type="BioCyc" id="MetaCyc:MONOMER-15839"/>
<dbReference type="GO" id="GO:0005737">
    <property type="term" value="C:cytoplasm"/>
    <property type="evidence" value="ECO:0007669"/>
    <property type="project" value="TreeGrafter"/>
</dbReference>
<dbReference type="GO" id="GO:0016020">
    <property type="term" value="C:membrane"/>
    <property type="evidence" value="ECO:0007669"/>
    <property type="project" value="TreeGrafter"/>
</dbReference>
<dbReference type="GO" id="GO:0034022">
    <property type="term" value="F:3-(hydroxyamino)phenol mutase activity"/>
    <property type="evidence" value="ECO:0000314"/>
    <property type="project" value="UniProtKB"/>
</dbReference>
<dbReference type="GO" id="GO:0004356">
    <property type="term" value="F:glutamine synthetase activity"/>
    <property type="evidence" value="ECO:0007669"/>
    <property type="project" value="InterPro"/>
</dbReference>
<dbReference type="GO" id="GO:0042537">
    <property type="term" value="P:benzene-containing compound metabolic process"/>
    <property type="evidence" value="ECO:0000314"/>
    <property type="project" value="UniProtKB"/>
</dbReference>
<dbReference type="GO" id="GO:0006542">
    <property type="term" value="P:glutamine biosynthetic process"/>
    <property type="evidence" value="ECO:0007669"/>
    <property type="project" value="InterPro"/>
</dbReference>
<dbReference type="GO" id="GO:0019740">
    <property type="term" value="P:nitrogen utilization"/>
    <property type="evidence" value="ECO:0007669"/>
    <property type="project" value="TreeGrafter"/>
</dbReference>
<dbReference type="FunFam" id="3.10.20.70:FF:000001">
    <property type="entry name" value="Glutamine synthetase"/>
    <property type="match status" value="1"/>
</dbReference>
<dbReference type="FunFam" id="3.30.590.10:FF:000001">
    <property type="entry name" value="Glutamine synthetase"/>
    <property type="match status" value="1"/>
</dbReference>
<dbReference type="Gene3D" id="3.10.20.70">
    <property type="entry name" value="Glutamine synthetase, N-terminal domain"/>
    <property type="match status" value="1"/>
</dbReference>
<dbReference type="Gene3D" id="3.30.590.10">
    <property type="entry name" value="Glutamine synthetase/guanido kinase, catalytic domain"/>
    <property type="match status" value="1"/>
</dbReference>
<dbReference type="InterPro" id="IPR008147">
    <property type="entry name" value="Gln_synt_N"/>
</dbReference>
<dbReference type="InterPro" id="IPR036651">
    <property type="entry name" value="Gln_synt_N_sf"/>
</dbReference>
<dbReference type="InterPro" id="IPR014746">
    <property type="entry name" value="Gln_synth/guanido_kin_cat_dom"/>
</dbReference>
<dbReference type="InterPro" id="IPR008146">
    <property type="entry name" value="Gln_synth_cat_dom"/>
</dbReference>
<dbReference type="InterPro" id="IPR027303">
    <property type="entry name" value="Gln_synth_gly_rich_site"/>
</dbReference>
<dbReference type="InterPro" id="IPR004809">
    <property type="entry name" value="Gln_synth_I"/>
</dbReference>
<dbReference type="InterPro" id="IPR001637">
    <property type="entry name" value="Gln_synth_I_adenylation_site"/>
</dbReference>
<dbReference type="InterPro" id="IPR027302">
    <property type="entry name" value="Gln_synth_N_conserv_site"/>
</dbReference>
<dbReference type="NCBIfam" id="TIGR00653">
    <property type="entry name" value="GlnA"/>
    <property type="match status" value="1"/>
</dbReference>
<dbReference type="PANTHER" id="PTHR43407">
    <property type="entry name" value="GLUTAMINE SYNTHETASE"/>
    <property type="match status" value="1"/>
</dbReference>
<dbReference type="PANTHER" id="PTHR43407:SF2">
    <property type="entry name" value="GLUTAMINE SYNTHETASE"/>
    <property type="match status" value="1"/>
</dbReference>
<dbReference type="Pfam" id="PF00120">
    <property type="entry name" value="Gln-synt_C"/>
    <property type="match status" value="1"/>
</dbReference>
<dbReference type="Pfam" id="PF03951">
    <property type="entry name" value="Gln-synt_N"/>
    <property type="match status" value="1"/>
</dbReference>
<dbReference type="SMART" id="SM01230">
    <property type="entry name" value="Gln-synt_C"/>
    <property type="match status" value="1"/>
</dbReference>
<dbReference type="SUPFAM" id="SSF54368">
    <property type="entry name" value="Glutamine synthetase, N-terminal domain"/>
    <property type="match status" value="1"/>
</dbReference>
<dbReference type="SUPFAM" id="SSF55931">
    <property type="entry name" value="Glutamine synthetase/guanido kinase"/>
    <property type="match status" value="1"/>
</dbReference>
<dbReference type="PROSITE" id="PS00180">
    <property type="entry name" value="GLNA_1"/>
    <property type="match status" value="1"/>
</dbReference>
<dbReference type="PROSITE" id="PS00182">
    <property type="entry name" value="GLNA_ADENYLATION"/>
    <property type="match status" value="1"/>
</dbReference>
<dbReference type="PROSITE" id="PS00181">
    <property type="entry name" value="GLNA_ATP"/>
    <property type="match status" value="1"/>
</dbReference>
<dbReference type="PROSITE" id="PS51986">
    <property type="entry name" value="GS_BETA_GRASP"/>
    <property type="match status" value="1"/>
</dbReference>
<dbReference type="PROSITE" id="PS51987">
    <property type="entry name" value="GS_CATALYTIC"/>
    <property type="match status" value="1"/>
</dbReference>
<proteinExistence type="evidence at protein level"/>
<evidence type="ECO:0000255" key="1">
    <source>
        <dbReference type="PROSITE-ProRule" id="PRU01330"/>
    </source>
</evidence>
<evidence type="ECO:0000255" key="2">
    <source>
        <dbReference type="PROSITE-ProRule" id="PRU01331"/>
    </source>
</evidence>
<evidence type="ECO:0000269" key="3">
    <source>
    </source>
</evidence>
<evidence type="ECO:0000305" key="4"/>
<protein>
    <recommendedName>
        <fullName>3-hydroxylaminophenol mutase</fullName>
        <shortName>3HAP mutase</shortName>
        <ecNumber>5.4.4.3</ecNumber>
    </recommendedName>
    <alternativeName>
        <fullName>3-(hydroxyamino)phenol mutase</fullName>
    </alternativeName>
</protein>
<feature type="initiator methionine" description="Removed" evidence="3">
    <location>
        <position position="1"/>
    </location>
</feature>
<feature type="chain" id="PRO_0000418646" description="3-hydroxylaminophenol mutase">
    <location>
        <begin position="2"/>
        <end position="471"/>
    </location>
</feature>
<feature type="domain" description="GS beta-grasp" evidence="1">
    <location>
        <begin position="15"/>
        <end position="100"/>
    </location>
</feature>
<feature type="domain" description="GS catalytic" evidence="2">
    <location>
        <begin position="107"/>
        <end position="471"/>
    </location>
</feature>
<gene>
    <name type="ordered locus">Reut_A2057</name>
</gene>
<organism>
    <name type="scientific">Cupriavidus pinatubonensis (strain JMP 134 / LMG 1197)</name>
    <name type="common">Cupriavidus necator (strain JMP 134)</name>
    <dbReference type="NCBI Taxonomy" id="264198"/>
    <lineage>
        <taxon>Bacteria</taxon>
        <taxon>Pseudomonadati</taxon>
        <taxon>Pseudomonadota</taxon>
        <taxon>Betaproteobacteria</taxon>
        <taxon>Burkholderiales</taxon>
        <taxon>Burkholderiaceae</taxon>
        <taxon>Cupriavidus</taxon>
    </lineage>
</organism>